<proteinExistence type="predicted"/>
<reference key="1">
    <citation type="journal article" date="1997" name="Nature">
        <title>The complete genome sequence of the Gram-positive bacterium Bacillus subtilis.</title>
        <authorList>
            <person name="Kunst F."/>
            <person name="Ogasawara N."/>
            <person name="Moszer I."/>
            <person name="Albertini A.M."/>
            <person name="Alloni G."/>
            <person name="Azevedo V."/>
            <person name="Bertero M.G."/>
            <person name="Bessieres P."/>
            <person name="Bolotin A."/>
            <person name="Borchert S."/>
            <person name="Borriss R."/>
            <person name="Boursier L."/>
            <person name="Brans A."/>
            <person name="Braun M."/>
            <person name="Brignell S.C."/>
            <person name="Bron S."/>
            <person name="Brouillet S."/>
            <person name="Bruschi C.V."/>
            <person name="Caldwell B."/>
            <person name="Capuano V."/>
            <person name="Carter N.M."/>
            <person name="Choi S.-K."/>
            <person name="Codani J.-J."/>
            <person name="Connerton I.F."/>
            <person name="Cummings N.J."/>
            <person name="Daniel R.A."/>
            <person name="Denizot F."/>
            <person name="Devine K.M."/>
            <person name="Duesterhoeft A."/>
            <person name="Ehrlich S.D."/>
            <person name="Emmerson P.T."/>
            <person name="Entian K.-D."/>
            <person name="Errington J."/>
            <person name="Fabret C."/>
            <person name="Ferrari E."/>
            <person name="Foulger D."/>
            <person name="Fritz C."/>
            <person name="Fujita M."/>
            <person name="Fujita Y."/>
            <person name="Fuma S."/>
            <person name="Galizzi A."/>
            <person name="Galleron N."/>
            <person name="Ghim S.-Y."/>
            <person name="Glaser P."/>
            <person name="Goffeau A."/>
            <person name="Golightly E.J."/>
            <person name="Grandi G."/>
            <person name="Guiseppi G."/>
            <person name="Guy B.J."/>
            <person name="Haga K."/>
            <person name="Haiech J."/>
            <person name="Harwood C.R."/>
            <person name="Henaut A."/>
            <person name="Hilbert H."/>
            <person name="Holsappel S."/>
            <person name="Hosono S."/>
            <person name="Hullo M.-F."/>
            <person name="Itaya M."/>
            <person name="Jones L.-M."/>
            <person name="Joris B."/>
            <person name="Karamata D."/>
            <person name="Kasahara Y."/>
            <person name="Klaerr-Blanchard M."/>
            <person name="Klein C."/>
            <person name="Kobayashi Y."/>
            <person name="Koetter P."/>
            <person name="Koningstein G."/>
            <person name="Krogh S."/>
            <person name="Kumano M."/>
            <person name="Kurita K."/>
            <person name="Lapidus A."/>
            <person name="Lardinois S."/>
            <person name="Lauber J."/>
            <person name="Lazarevic V."/>
            <person name="Lee S.-M."/>
            <person name="Levine A."/>
            <person name="Liu H."/>
            <person name="Masuda S."/>
            <person name="Mauel C."/>
            <person name="Medigue C."/>
            <person name="Medina N."/>
            <person name="Mellado R.P."/>
            <person name="Mizuno M."/>
            <person name="Moestl D."/>
            <person name="Nakai S."/>
            <person name="Noback M."/>
            <person name="Noone D."/>
            <person name="O'Reilly M."/>
            <person name="Ogawa K."/>
            <person name="Ogiwara A."/>
            <person name="Oudega B."/>
            <person name="Park S.-H."/>
            <person name="Parro V."/>
            <person name="Pohl T.M."/>
            <person name="Portetelle D."/>
            <person name="Porwollik S."/>
            <person name="Prescott A.M."/>
            <person name="Presecan E."/>
            <person name="Pujic P."/>
            <person name="Purnelle B."/>
            <person name="Rapoport G."/>
            <person name="Rey M."/>
            <person name="Reynolds S."/>
            <person name="Rieger M."/>
            <person name="Rivolta C."/>
            <person name="Rocha E."/>
            <person name="Roche B."/>
            <person name="Rose M."/>
            <person name="Sadaie Y."/>
            <person name="Sato T."/>
            <person name="Scanlan E."/>
            <person name="Schleich S."/>
            <person name="Schroeter R."/>
            <person name="Scoffone F."/>
            <person name="Sekiguchi J."/>
            <person name="Sekowska A."/>
            <person name="Seror S.J."/>
            <person name="Serror P."/>
            <person name="Shin B.-S."/>
            <person name="Soldo B."/>
            <person name="Sorokin A."/>
            <person name="Tacconi E."/>
            <person name="Takagi T."/>
            <person name="Takahashi H."/>
            <person name="Takemaru K."/>
            <person name="Takeuchi M."/>
            <person name="Tamakoshi A."/>
            <person name="Tanaka T."/>
            <person name="Terpstra P."/>
            <person name="Tognoni A."/>
            <person name="Tosato V."/>
            <person name="Uchiyama S."/>
            <person name="Vandenbol M."/>
            <person name="Vannier F."/>
            <person name="Vassarotti A."/>
            <person name="Viari A."/>
            <person name="Wambutt R."/>
            <person name="Wedler E."/>
            <person name="Wedler H."/>
            <person name="Weitzenegger T."/>
            <person name="Winters P."/>
            <person name="Wipat A."/>
            <person name="Yamamoto H."/>
            <person name="Yamane K."/>
            <person name="Yasumoto K."/>
            <person name="Yata K."/>
            <person name="Yoshida K."/>
            <person name="Yoshikawa H.-F."/>
            <person name="Zumstein E."/>
            <person name="Yoshikawa H."/>
            <person name="Danchin A."/>
        </authorList>
    </citation>
    <scope>NUCLEOTIDE SEQUENCE [LARGE SCALE GENOMIC DNA]</scope>
    <source>
        <strain>168</strain>
    </source>
</reference>
<feature type="chain" id="PRO_0000379106" description="Uncharacterized membrane protein YoyF">
    <location>
        <begin position="1"/>
        <end position="47"/>
    </location>
</feature>
<feature type="transmembrane region" description="Helical" evidence="1">
    <location>
        <begin position="28"/>
        <end position="45"/>
    </location>
</feature>
<evidence type="ECO:0000255" key="1"/>
<evidence type="ECO:0000305" key="2"/>
<comment type="subcellular location">
    <subcellularLocation>
        <location evidence="2">Cell membrane</location>
        <topology evidence="2">Single-pass membrane protein</topology>
    </subcellularLocation>
</comment>
<dbReference type="EMBL" id="AL009126">
    <property type="protein sequence ID" value="CAX52641.1"/>
    <property type="molecule type" value="Genomic_DNA"/>
</dbReference>
<dbReference type="RefSeq" id="WP_003231164.1">
    <property type="nucleotide sequence ID" value="NZ_OZ025638.1"/>
</dbReference>
<dbReference type="RefSeq" id="YP_003097744.1">
    <property type="nucleotide sequence ID" value="NC_000964.3"/>
</dbReference>
<dbReference type="SMR" id="C0H433"/>
<dbReference type="FunCoup" id="C0H433">
    <property type="interactions" value="1"/>
</dbReference>
<dbReference type="STRING" id="224308.BSU19669"/>
<dbReference type="PaxDb" id="224308-BSU19669"/>
<dbReference type="EnsemblBacteria" id="CAX52641">
    <property type="protein sequence ID" value="CAX52641"/>
    <property type="gene ID" value="BSU_19669"/>
</dbReference>
<dbReference type="GeneID" id="8303015"/>
<dbReference type="KEGG" id="bsu:BSU19669"/>
<dbReference type="PATRIC" id="fig|224308.179.peg.2152"/>
<dbReference type="InParanoid" id="C0H433"/>
<dbReference type="OrthoDB" id="2893646at2"/>
<dbReference type="BioCyc" id="BSUB:BSU19669-MONOMER"/>
<dbReference type="Proteomes" id="UP000001570">
    <property type="component" value="Chromosome"/>
</dbReference>
<dbReference type="GO" id="GO:0005886">
    <property type="term" value="C:plasma membrane"/>
    <property type="evidence" value="ECO:0007669"/>
    <property type="project" value="UniProtKB-SubCell"/>
</dbReference>
<name>YOYF_BACSU</name>
<protein>
    <recommendedName>
        <fullName>Uncharacterized membrane protein YoyF</fullName>
    </recommendedName>
</protein>
<accession>C0H433</accession>
<gene>
    <name type="primary">yoyF</name>
    <name type="ordered locus">BSU19669</name>
</gene>
<sequence length="47" mass="5622">MIAKMMEALDGERFDIIMEKTLKGMTRVMIWGCLPYFLYVLIRMFTN</sequence>
<keyword id="KW-1003">Cell membrane</keyword>
<keyword id="KW-0472">Membrane</keyword>
<keyword id="KW-1185">Reference proteome</keyword>
<keyword id="KW-0812">Transmembrane</keyword>
<keyword id="KW-1133">Transmembrane helix</keyword>
<organism>
    <name type="scientific">Bacillus subtilis (strain 168)</name>
    <dbReference type="NCBI Taxonomy" id="224308"/>
    <lineage>
        <taxon>Bacteria</taxon>
        <taxon>Bacillati</taxon>
        <taxon>Bacillota</taxon>
        <taxon>Bacilli</taxon>
        <taxon>Bacillales</taxon>
        <taxon>Bacillaceae</taxon>
        <taxon>Bacillus</taxon>
    </lineage>
</organism>